<proteinExistence type="inferred from homology"/>
<keyword id="KW-0997">Cell inner membrane</keyword>
<keyword id="KW-1003">Cell membrane</keyword>
<keyword id="KW-0201">Cytochrome c-type biogenesis</keyword>
<keyword id="KW-0349">Heme</keyword>
<keyword id="KW-0408">Iron</keyword>
<keyword id="KW-0472">Membrane</keyword>
<keyword id="KW-0479">Metal-binding</keyword>
<keyword id="KW-0735">Signal-anchor</keyword>
<keyword id="KW-0812">Transmembrane</keyword>
<keyword id="KW-1133">Transmembrane helix</keyword>
<protein>
    <recommendedName>
        <fullName evidence="1">Cytochrome c-type biogenesis protein CcmE</fullName>
    </recommendedName>
    <alternativeName>
        <fullName evidence="1">Cytochrome c maturation protein E</fullName>
    </alternativeName>
    <alternativeName>
        <fullName evidence="1">Heme chaperone CcmE</fullName>
    </alternativeName>
</protein>
<gene>
    <name evidence="1" type="primary">ccmE</name>
    <name evidence="1" type="synonym">cycJ</name>
    <name type="ordered locus">Ecaj_0286</name>
</gene>
<name>CCME_EHRCJ</name>
<dbReference type="EMBL" id="CP000107">
    <property type="protein sequence ID" value="AAZ68333.1"/>
    <property type="molecule type" value="Genomic_DNA"/>
</dbReference>
<dbReference type="RefSeq" id="WP_011304411.1">
    <property type="nucleotide sequence ID" value="NC_007354.1"/>
</dbReference>
<dbReference type="SMR" id="Q3YSH2"/>
<dbReference type="FunCoup" id="Q3YSH2">
    <property type="interactions" value="24"/>
</dbReference>
<dbReference type="STRING" id="269484.Ecaj_0286"/>
<dbReference type="KEGG" id="ecn:Ecaj_0286"/>
<dbReference type="eggNOG" id="COG2332">
    <property type="taxonomic scope" value="Bacteria"/>
</dbReference>
<dbReference type="HOGENOM" id="CLU_079503_1_1_5"/>
<dbReference type="InParanoid" id="Q3YSH2"/>
<dbReference type="Proteomes" id="UP000000435">
    <property type="component" value="Chromosome"/>
</dbReference>
<dbReference type="GO" id="GO:0005886">
    <property type="term" value="C:plasma membrane"/>
    <property type="evidence" value="ECO:0007669"/>
    <property type="project" value="UniProtKB-SubCell"/>
</dbReference>
<dbReference type="GO" id="GO:0020037">
    <property type="term" value="F:heme binding"/>
    <property type="evidence" value="ECO:0007669"/>
    <property type="project" value="InterPro"/>
</dbReference>
<dbReference type="GO" id="GO:0046872">
    <property type="term" value="F:metal ion binding"/>
    <property type="evidence" value="ECO:0007669"/>
    <property type="project" value="UniProtKB-KW"/>
</dbReference>
<dbReference type="GO" id="GO:0017004">
    <property type="term" value="P:cytochrome complex assembly"/>
    <property type="evidence" value="ECO:0007669"/>
    <property type="project" value="UniProtKB-KW"/>
</dbReference>
<dbReference type="Gene3D" id="2.40.50.140">
    <property type="entry name" value="Nucleic acid-binding proteins"/>
    <property type="match status" value="1"/>
</dbReference>
<dbReference type="HAMAP" id="MF_01959">
    <property type="entry name" value="CcmE"/>
    <property type="match status" value="1"/>
</dbReference>
<dbReference type="InterPro" id="IPR004329">
    <property type="entry name" value="CcmE"/>
</dbReference>
<dbReference type="InterPro" id="IPR036127">
    <property type="entry name" value="CcmE-like_sf"/>
</dbReference>
<dbReference type="InterPro" id="IPR012340">
    <property type="entry name" value="NA-bd_OB-fold"/>
</dbReference>
<dbReference type="NCBIfam" id="NF009727">
    <property type="entry name" value="PRK13254.1-1"/>
    <property type="match status" value="1"/>
</dbReference>
<dbReference type="PANTHER" id="PTHR34128">
    <property type="entry name" value="CYTOCHROME C-TYPE BIOGENESIS PROTEIN CCME HOMOLOG, MITOCHONDRIAL"/>
    <property type="match status" value="1"/>
</dbReference>
<dbReference type="PANTHER" id="PTHR34128:SF2">
    <property type="entry name" value="CYTOCHROME C-TYPE BIOGENESIS PROTEIN CCME HOMOLOG, MITOCHONDRIAL"/>
    <property type="match status" value="1"/>
</dbReference>
<dbReference type="Pfam" id="PF03100">
    <property type="entry name" value="CcmE"/>
    <property type="match status" value="1"/>
</dbReference>
<dbReference type="SUPFAM" id="SSF82093">
    <property type="entry name" value="Heme chaperone CcmE"/>
    <property type="match status" value="1"/>
</dbReference>
<reference key="1">
    <citation type="journal article" date="2006" name="J. Bacteriol.">
        <title>The genome of the obligately intracellular bacterium Ehrlichia canis reveals themes of complex membrane structure and immune evasion strategies.</title>
        <authorList>
            <person name="Mavromatis K."/>
            <person name="Doyle C.K."/>
            <person name="Lykidis A."/>
            <person name="Ivanova N."/>
            <person name="Francino M.P."/>
            <person name="Chain P."/>
            <person name="Shin M."/>
            <person name="Malfatti S."/>
            <person name="Larimer F."/>
            <person name="Copeland A."/>
            <person name="Detter J.C."/>
            <person name="Land M."/>
            <person name="Richardson P.M."/>
            <person name="Yu X.J."/>
            <person name="Walker D.H."/>
            <person name="McBride J.W."/>
            <person name="Kyrpides N.C."/>
        </authorList>
    </citation>
    <scope>NUCLEOTIDE SEQUENCE [LARGE SCALE GENOMIC DNA]</scope>
    <source>
        <strain>Jake</strain>
    </source>
</reference>
<feature type="chain" id="PRO_0000238806" description="Cytochrome c-type biogenesis protein CcmE">
    <location>
        <begin position="1"/>
        <end position="133"/>
    </location>
</feature>
<feature type="topological domain" description="Cytoplasmic" evidence="1">
    <location>
        <begin position="1"/>
        <end position="7"/>
    </location>
</feature>
<feature type="transmembrane region" description="Helical; Signal-anchor for type II membrane protein" evidence="1">
    <location>
        <begin position="8"/>
        <end position="28"/>
    </location>
</feature>
<feature type="topological domain" description="Periplasmic" evidence="1">
    <location>
        <begin position="29"/>
        <end position="133"/>
    </location>
</feature>
<feature type="binding site" description="covalent" evidence="1">
    <location>
        <position position="121"/>
    </location>
    <ligand>
        <name>heme</name>
        <dbReference type="ChEBI" id="CHEBI:30413"/>
    </ligand>
</feature>
<feature type="binding site" description="axial binding residue" evidence="1">
    <location>
        <position position="125"/>
    </location>
    <ligand>
        <name>heme</name>
        <dbReference type="ChEBI" id="CHEBI:30413"/>
    </ligand>
    <ligandPart>
        <name>Fe</name>
        <dbReference type="ChEBI" id="CHEBI:18248"/>
    </ligandPart>
</feature>
<comment type="function">
    <text evidence="1">Heme chaperone required for the biogenesis of c-type cytochromes. Transiently binds heme delivered by CcmC and transfers the heme to apo-cytochromes in a process facilitated by CcmF and CcmH.</text>
</comment>
<comment type="subcellular location">
    <subcellularLocation>
        <location evidence="1">Cell inner membrane</location>
        <topology evidence="1">Single-pass type II membrane protein</topology>
        <orientation evidence="1">Periplasmic side</orientation>
    </subcellularLocation>
</comment>
<comment type="similarity">
    <text evidence="1">Belongs to the CcmE/CycJ family.</text>
</comment>
<sequence length="133" mass="14989">MKRKHKRLLFIIVTFIIFGSSVVIVLNKLRSNISFFFTPTEVLSGSINVSSNDIRIGGMVISGSLKRYDNLISFFITDLESQIKVVYQGILPPLFSEGSWVVAKGKMVNGEFNANEILAKHDENYKPGKYRAK</sequence>
<organism>
    <name type="scientific">Ehrlichia canis (strain Jake)</name>
    <dbReference type="NCBI Taxonomy" id="269484"/>
    <lineage>
        <taxon>Bacteria</taxon>
        <taxon>Pseudomonadati</taxon>
        <taxon>Pseudomonadota</taxon>
        <taxon>Alphaproteobacteria</taxon>
        <taxon>Rickettsiales</taxon>
        <taxon>Anaplasmataceae</taxon>
        <taxon>Ehrlichia</taxon>
    </lineage>
</organism>
<accession>Q3YSH2</accession>
<evidence type="ECO:0000255" key="1">
    <source>
        <dbReference type="HAMAP-Rule" id="MF_01959"/>
    </source>
</evidence>